<keyword id="KW-0010">Activator</keyword>
<keyword id="KW-0539">Nucleus</keyword>
<keyword id="KW-1185">Reference proteome</keyword>
<keyword id="KW-0677">Repeat</keyword>
<keyword id="KW-0804">Transcription</keyword>
<keyword id="KW-0805">Transcription regulation</keyword>
<reference key="1">
    <citation type="journal article" date="2007" name="Science">
        <title>Genome sequence of Aedes aegypti, a major arbovirus vector.</title>
        <authorList>
            <person name="Nene V."/>
            <person name="Wortman J.R."/>
            <person name="Lawson D."/>
            <person name="Haas B.J."/>
            <person name="Kodira C.D."/>
            <person name="Tu Z.J."/>
            <person name="Loftus B.J."/>
            <person name="Xi Z."/>
            <person name="Megy K."/>
            <person name="Grabherr M."/>
            <person name="Ren Q."/>
            <person name="Zdobnov E.M."/>
            <person name="Lobo N.F."/>
            <person name="Campbell K.S."/>
            <person name="Brown S.E."/>
            <person name="Bonaldo M.F."/>
            <person name="Zhu J."/>
            <person name="Sinkins S.P."/>
            <person name="Hogenkamp D.G."/>
            <person name="Amedeo P."/>
            <person name="Arensburger P."/>
            <person name="Atkinson P.W."/>
            <person name="Bidwell S.L."/>
            <person name="Biedler J."/>
            <person name="Birney E."/>
            <person name="Bruggner R.V."/>
            <person name="Costas J."/>
            <person name="Coy M.R."/>
            <person name="Crabtree J."/>
            <person name="Crawford M."/>
            <person name="DeBruyn B."/>
            <person name="DeCaprio D."/>
            <person name="Eiglmeier K."/>
            <person name="Eisenstadt E."/>
            <person name="El-Dorry H."/>
            <person name="Gelbart W.M."/>
            <person name="Gomes S.L."/>
            <person name="Hammond M."/>
            <person name="Hannick L.I."/>
            <person name="Hogan J.R."/>
            <person name="Holmes M.H."/>
            <person name="Jaffe D."/>
            <person name="Johnston S.J."/>
            <person name="Kennedy R.C."/>
            <person name="Koo H."/>
            <person name="Kravitz S."/>
            <person name="Kriventseva E.V."/>
            <person name="Kulp D."/>
            <person name="Labutti K."/>
            <person name="Lee E."/>
            <person name="Li S."/>
            <person name="Lovin D.D."/>
            <person name="Mao C."/>
            <person name="Mauceli E."/>
            <person name="Menck C.F."/>
            <person name="Miller J.R."/>
            <person name="Montgomery P."/>
            <person name="Mori A."/>
            <person name="Nascimento A.L."/>
            <person name="Naveira H.F."/>
            <person name="Nusbaum C."/>
            <person name="O'Leary S.B."/>
            <person name="Orvis J."/>
            <person name="Pertea M."/>
            <person name="Quesneville H."/>
            <person name="Reidenbach K.R."/>
            <person name="Rogers Y.-H.C."/>
            <person name="Roth C.W."/>
            <person name="Schneider J.R."/>
            <person name="Schatz M."/>
            <person name="Shumway M."/>
            <person name="Stanke M."/>
            <person name="Stinson E.O."/>
            <person name="Tubio J.M.C."/>
            <person name="Vanzee J.P."/>
            <person name="Verjovski-Almeida S."/>
            <person name="Werner D."/>
            <person name="White O.R."/>
            <person name="Wyder S."/>
            <person name="Zeng Q."/>
            <person name="Zhao Q."/>
            <person name="Zhao Y."/>
            <person name="Hill C.A."/>
            <person name="Raikhel A.S."/>
            <person name="Soares M.B."/>
            <person name="Knudson D.L."/>
            <person name="Lee N.H."/>
            <person name="Galagan J."/>
            <person name="Salzberg S.L."/>
            <person name="Paulsen I.T."/>
            <person name="Dimopoulos G."/>
            <person name="Collins F.H."/>
            <person name="Bruce B."/>
            <person name="Fraser-Liggett C.M."/>
            <person name="Severson D.W."/>
        </authorList>
    </citation>
    <scope>NUCLEOTIDE SEQUENCE [LARGE SCALE GENOMIC DNA]</scope>
    <source>
        <strain>LVPib12</strain>
    </source>
</reference>
<accession>Q16X15</accession>
<protein>
    <recommendedName>
        <fullName>Mediator of RNA polymerase II transcription subunit 24</fullName>
    </recommendedName>
    <alternativeName>
        <fullName>Mediator complex subunit 24</fullName>
    </alternativeName>
</protein>
<feature type="chain" id="PRO_0000305917" description="Mediator of RNA polymerase II transcription subunit 24">
    <location>
        <begin position="1"/>
        <end position="1005"/>
    </location>
</feature>
<comment type="function">
    <text evidence="1">Component of the Mediator complex, a coactivator involved in the regulated transcription of nearly all RNA polymerase II-dependent genes. Mediator functions as a bridge to convey information from gene-specific regulatory proteins to the basal RNA polymerase II transcription machinery. Mediator is recruited to promoters by direct interactions with regulatory proteins and serves as a scaffold for the assembly of a functional preinitiation complex with RNA polymerase II and the general transcription factors (By similarity).</text>
</comment>
<comment type="subunit">
    <text evidence="1">Component of the Mediator complex.</text>
</comment>
<comment type="subcellular location">
    <subcellularLocation>
        <location evidence="2">Nucleus</location>
    </subcellularLocation>
</comment>
<comment type="similarity">
    <text evidence="2">Belongs to the Mediator complex subunit 24 family.</text>
</comment>
<evidence type="ECO:0000250" key="1"/>
<evidence type="ECO:0000305" key="2"/>
<name>MED24_AEDAE</name>
<sequence length="1005" mass="113800">MIMDNQKSTSKTTLLKLMLLRAWKERWTDCQWGINVKAVLTRGVSGDVYNLADCILQQAVVGSGANTLFLSYLKHSLCAHLISHAAVLKRISKYDHFEMHHCLIALLEFLESIIGGVTCRGKQEEGLLTKAMLSLVYWLMQIYEHAIETFSENRSLTTEQQEVVEKTANVLEKIVQSQFLLGVVFVGKFEDPELFGMLAKKCLEIENLTVKSGFVPPVVSQKNVTVNDYIRKVASIETETLEIKEFDGKGVEPITYCMQPLIAIDILFNPNCDTQMYVLEFLSIQALKGFPLSRLYCEIIRACLTCLNNVSGTSRESYICAFTFIKVPQIMRQIHLQTRVLTPNDFEDAKLDYSPDVVEAFELLLQDSAILDFMDAKCACNTVEYLLNEMLKHHLINEKYSKLIAAKRDGITSSLQKLDLNTNQHSIVKFVLRAEPPLVGILKTLSSDYNKVQEALLGMLCQVLSGNSFELILSVATVEGKLKTFVAGLIKCNENSKQVPGEMGKPAMTRAALFDVSFLMLVFIVQNYGSEGVLTDGTDSFFEKWVRECMVEKHKSKSPMNMVKLCDQNKVDELIVSLNSPDGLKATSLKWQEICANIPGLLYQVLLAWENETLSTGEIKKFLDSLKSRFCCFSICATSWLCAYMQIIRQDELLKPMNMIQQFVTNISSEEMMQQEYLKERLGLTVQIIRKMQIDFQRLPVASPKMRNQLQSQSLVSQAPLEEQFEEVWKGVLEKGWLPIEATLALENLLQSCGPFWLVDKLVQQIFHCKYIREMNKTMDIVFAIMHLDIERCTIALLSQLVPMMLLNKLQISEIVDPFSRVLAKLCVYCIVATMEAPAVPTKKRSRAAITAEGDELDTLCSTPKMRKIGSESCDSSSSDFMLEQVLAARDNPAPLKEPLQGCLQTLFRTFSQYIVSDELSPKIFFMFQLLSLLVEVGKDRIKPVLKLIPNGLIQNMMKINATDDMTVGFILRLYDLNTASGRQFAMSDLCLFRNIQMRKDSIKL</sequence>
<dbReference type="EMBL" id="CH477548">
    <property type="protein sequence ID" value="EAT39141.1"/>
    <property type="molecule type" value="Genomic_DNA"/>
</dbReference>
<dbReference type="SMR" id="Q16X15"/>
<dbReference type="FunCoup" id="Q16X15">
    <property type="interactions" value="874"/>
</dbReference>
<dbReference type="STRING" id="7159.Q16X15"/>
<dbReference type="PaxDb" id="7159-AAEL009027-PA"/>
<dbReference type="EnsemblMetazoa" id="AAEL009027-RA">
    <property type="protein sequence ID" value="AAEL009027-PA"/>
    <property type="gene ID" value="AAEL009027"/>
</dbReference>
<dbReference type="EnsemblMetazoa" id="AAEL009027-RB">
    <property type="protein sequence ID" value="AAEL009027-PB"/>
    <property type="gene ID" value="AAEL009027"/>
</dbReference>
<dbReference type="GeneID" id="5571389"/>
<dbReference type="KEGG" id="aag:5571389"/>
<dbReference type="CTD" id="9862"/>
<dbReference type="VEuPathDB" id="VectorBase:AAEL009027"/>
<dbReference type="eggNOG" id="ENOG502QPJD">
    <property type="taxonomic scope" value="Eukaryota"/>
</dbReference>
<dbReference type="HOGENOM" id="CLU_007484_0_0_1"/>
<dbReference type="InParanoid" id="Q16X15"/>
<dbReference type="OMA" id="RWSDSQW"/>
<dbReference type="OrthoDB" id="21216at2759"/>
<dbReference type="PhylomeDB" id="Q16X15"/>
<dbReference type="Proteomes" id="UP000008820">
    <property type="component" value="Chromosome 2"/>
</dbReference>
<dbReference type="Proteomes" id="UP000682892">
    <property type="component" value="Unassembled WGS sequence"/>
</dbReference>
<dbReference type="GO" id="GO:0016592">
    <property type="term" value="C:mediator complex"/>
    <property type="evidence" value="ECO:0007669"/>
    <property type="project" value="InterPro"/>
</dbReference>
<dbReference type="GO" id="GO:0003712">
    <property type="term" value="F:transcription coregulator activity"/>
    <property type="evidence" value="ECO:0007669"/>
    <property type="project" value="TreeGrafter"/>
</dbReference>
<dbReference type="GO" id="GO:0060261">
    <property type="term" value="P:positive regulation of transcription initiation by RNA polymerase II"/>
    <property type="evidence" value="ECO:0007669"/>
    <property type="project" value="TreeGrafter"/>
</dbReference>
<dbReference type="InterPro" id="IPR021429">
    <property type="entry name" value="Mediator_Med24"/>
</dbReference>
<dbReference type="PANTHER" id="PTHR12898">
    <property type="entry name" value="MEDIATOR OF RNA POLYMERASE II TRANSCRIPTION SUBUNIT 24"/>
    <property type="match status" value="1"/>
</dbReference>
<dbReference type="PANTHER" id="PTHR12898:SF1">
    <property type="entry name" value="MEDIATOR OF RNA POLYMERASE II TRANSCRIPTION SUBUNIT 24"/>
    <property type="match status" value="1"/>
</dbReference>
<dbReference type="Pfam" id="PF11277">
    <property type="entry name" value="Med24_N"/>
    <property type="match status" value="1"/>
</dbReference>
<proteinExistence type="inferred from homology"/>
<gene>
    <name type="primary">MED24</name>
    <name type="ORF">AAEL009027</name>
</gene>
<organism>
    <name type="scientific">Aedes aegypti</name>
    <name type="common">Yellowfever mosquito</name>
    <name type="synonym">Culex aegypti</name>
    <dbReference type="NCBI Taxonomy" id="7159"/>
    <lineage>
        <taxon>Eukaryota</taxon>
        <taxon>Metazoa</taxon>
        <taxon>Ecdysozoa</taxon>
        <taxon>Arthropoda</taxon>
        <taxon>Hexapoda</taxon>
        <taxon>Insecta</taxon>
        <taxon>Pterygota</taxon>
        <taxon>Neoptera</taxon>
        <taxon>Endopterygota</taxon>
        <taxon>Diptera</taxon>
        <taxon>Nematocera</taxon>
        <taxon>Culicoidea</taxon>
        <taxon>Culicidae</taxon>
        <taxon>Culicinae</taxon>
        <taxon>Aedini</taxon>
        <taxon>Aedes</taxon>
        <taxon>Stegomyia</taxon>
    </lineage>
</organism>